<organism>
    <name type="scientific">Mus musculus</name>
    <name type="common">Mouse</name>
    <dbReference type="NCBI Taxonomy" id="10090"/>
    <lineage>
        <taxon>Eukaryota</taxon>
        <taxon>Metazoa</taxon>
        <taxon>Chordata</taxon>
        <taxon>Craniata</taxon>
        <taxon>Vertebrata</taxon>
        <taxon>Euteleostomi</taxon>
        <taxon>Mammalia</taxon>
        <taxon>Eutheria</taxon>
        <taxon>Euarchontoglires</taxon>
        <taxon>Glires</taxon>
        <taxon>Rodentia</taxon>
        <taxon>Myomorpha</taxon>
        <taxon>Muroidea</taxon>
        <taxon>Muridae</taxon>
        <taxon>Murinae</taxon>
        <taxon>Mus</taxon>
        <taxon>Mus</taxon>
    </lineage>
</organism>
<name>CC125_MOUSE</name>
<accession>Q5U465</accession>
<accession>E9QPT5</accession>
<accession>Q8CEN7</accession>
<sequence>MSKVPRSSSEAEDIWETEDDMTEGDLGYGLGRKPGGIYEVPCSITSKKRSDGKNSSPPPFPRKGEERSETSFQYSRRKGFQDTSAEGYRASRLSSTDSNSELSDEQLRRRLHEALEDVEILKTELEASQRQLEGKEEALKILQSMAMLGKATSHTQTMLQKTIEQKRSLEKEINALQWEMEFDQDRFKNIEESWIQKCDRLNCDNAVLRENLKLRTEEIKMLKSKNAVLNQRYLEALAMLDIKEQKMGQEESGFTDVSGLELAVLGACLCHGPGGSPCSCAKMAASTRKLVLQLRHELETLQKSKEEAHITADAFRIAFEQQLMRKNEQALRLAGGDLCKRAATWINRQHQADDGYPAQRRKKTLGQRLLGILPSENSSKGAEDQDNMQEVFKMLVDLLNDKEEALAHQRKVSYMLARALEDKDTASERNKEKIPMSQTFPFKTAWHDASELCGLRDPVQSNHVSEPMACICSIQHPPKVSDCPRTLKRSCSLPSTLFYK</sequence>
<keyword id="KW-0025">Alternative splicing</keyword>
<keyword id="KW-0175">Coiled coil</keyword>
<keyword id="KW-0963">Cytoplasm</keyword>
<keyword id="KW-0597">Phosphoprotein</keyword>
<keyword id="KW-1185">Reference proteome</keyword>
<feature type="chain" id="PRO_0000288813" description="Coiled-coil domain-containing protein 125">
    <location>
        <begin position="1"/>
        <end position="500"/>
    </location>
</feature>
<feature type="region of interest" description="Disordered" evidence="4">
    <location>
        <begin position="1"/>
        <end position="105"/>
    </location>
</feature>
<feature type="coiled-coil region" evidence="3">
    <location>
        <begin position="101"/>
        <end position="237"/>
    </location>
</feature>
<feature type="coiled-coil region" evidence="3">
    <location>
        <begin position="286"/>
        <end position="314"/>
    </location>
</feature>
<feature type="compositionally biased region" description="Acidic residues" evidence="4">
    <location>
        <begin position="10"/>
        <end position="23"/>
    </location>
</feature>
<feature type="compositionally biased region" description="Polar residues" evidence="4">
    <location>
        <begin position="92"/>
        <end position="101"/>
    </location>
</feature>
<feature type="modified residue" description="Phosphoserine" evidence="2">
    <location>
        <position position="492"/>
    </location>
</feature>
<feature type="splice variant" id="VSP_025782" description="In isoform 2." evidence="6">
    <location>
        <begin position="1"/>
        <end position="170"/>
    </location>
</feature>
<feature type="splice variant" id="VSP_026155" description="In isoform 2." evidence="6">
    <original>K</original>
    <variation>M</variation>
    <location>
        <position position="171"/>
    </location>
</feature>
<feature type="splice variant" id="VSP_025783" description="In isoform 2." evidence="6">
    <original>GY</original>
    <variation>VE</variation>
    <location>
        <begin position="355"/>
        <end position="356"/>
    </location>
</feature>
<feature type="splice variant" id="VSP_025784" description="In isoform 2." evidence="6">
    <location>
        <begin position="357"/>
        <end position="500"/>
    </location>
</feature>
<feature type="sequence conflict" description="In Ref. 3; AAH85249." evidence="7" ref="3">
    <original>I</original>
    <variation>T</variation>
    <location>
        <position position="346"/>
    </location>
</feature>
<feature type="sequence conflict" description="In Ref. 3; AAH85249." evidence="7" ref="3">
    <original>M</original>
    <variation>V</variation>
    <location>
        <position position="468"/>
    </location>
</feature>
<proteinExistence type="evidence at transcript level"/>
<comment type="function">
    <text evidence="1">May be involved in the regulation of cell migration.</text>
</comment>
<comment type="subcellular location">
    <subcellularLocation>
        <location evidence="1">Cytoplasm</location>
    </subcellularLocation>
</comment>
<comment type="alternative products">
    <event type="alternative splicing"/>
    <isoform>
        <id>Q5U465-1</id>
        <name>1</name>
        <sequence type="displayed"/>
    </isoform>
    <isoform>
        <id>Q5U465-2</id>
        <name>2</name>
        <sequence type="described" ref="VSP_025782 VSP_026155 VSP_025783 VSP_025784"/>
    </isoform>
</comment>
<comment type="tissue specificity">
    <text evidence="5">Expressed in many tissues, with highest levels in spleen, thymus and bone marrow.</text>
</comment>
<evidence type="ECO:0000250" key="1"/>
<evidence type="ECO:0000250" key="2">
    <source>
        <dbReference type="UniProtKB" id="Q86Z20"/>
    </source>
</evidence>
<evidence type="ECO:0000255" key="3"/>
<evidence type="ECO:0000256" key="4">
    <source>
        <dbReference type="SAM" id="MobiDB-lite"/>
    </source>
</evidence>
<evidence type="ECO:0000269" key="5">
    <source>
    </source>
</evidence>
<evidence type="ECO:0000303" key="6">
    <source>
    </source>
</evidence>
<evidence type="ECO:0000305" key="7"/>
<gene>
    <name type="primary">Ccdc125</name>
    <name type="synonym">Kenae</name>
</gene>
<reference key="1">
    <citation type="journal article" date="2005" name="Science">
        <title>The transcriptional landscape of the mammalian genome.</title>
        <authorList>
            <person name="Carninci P."/>
            <person name="Kasukawa T."/>
            <person name="Katayama S."/>
            <person name="Gough J."/>
            <person name="Frith M.C."/>
            <person name="Maeda N."/>
            <person name="Oyama R."/>
            <person name="Ravasi T."/>
            <person name="Lenhard B."/>
            <person name="Wells C."/>
            <person name="Kodzius R."/>
            <person name="Shimokawa K."/>
            <person name="Bajic V.B."/>
            <person name="Brenner S.E."/>
            <person name="Batalov S."/>
            <person name="Forrest A.R."/>
            <person name="Zavolan M."/>
            <person name="Davis M.J."/>
            <person name="Wilming L.G."/>
            <person name="Aidinis V."/>
            <person name="Allen J.E."/>
            <person name="Ambesi-Impiombato A."/>
            <person name="Apweiler R."/>
            <person name="Aturaliya R.N."/>
            <person name="Bailey T.L."/>
            <person name="Bansal M."/>
            <person name="Baxter L."/>
            <person name="Beisel K.W."/>
            <person name="Bersano T."/>
            <person name="Bono H."/>
            <person name="Chalk A.M."/>
            <person name="Chiu K.P."/>
            <person name="Choudhary V."/>
            <person name="Christoffels A."/>
            <person name="Clutterbuck D.R."/>
            <person name="Crowe M.L."/>
            <person name="Dalla E."/>
            <person name="Dalrymple B.P."/>
            <person name="de Bono B."/>
            <person name="Della Gatta G."/>
            <person name="di Bernardo D."/>
            <person name="Down T."/>
            <person name="Engstrom P."/>
            <person name="Fagiolini M."/>
            <person name="Faulkner G."/>
            <person name="Fletcher C.F."/>
            <person name="Fukushima T."/>
            <person name="Furuno M."/>
            <person name="Futaki S."/>
            <person name="Gariboldi M."/>
            <person name="Georgii-Hemming P."/>
            <person name="Gingeras T.R."/>
            <person name="Gojobori T."/>
            <person name="Green R.E."/>
            <person name="Gustincich S."/>
            <person name="Harbers M."/>
            <person name="Hayashi Y."/>
            <person name="Hensch T.K."/>
            <person name="Hirokawa N."/>
            <person name="Hill D."/>
            <person name="Huminiecki L."/>
            <person name="Iacono M."/>
            <person name="Ikeo K."/>
            <person name="Iwama A."/>
            <person name="Ishikawa T."/>
            <person name="Jakt M."/>
            <person name="Kanapin A."/>
            <person name="Katoh M."/>
            <person name="Kawasawa Y."/>
            <person name="Kelso J."/>
            <person name="Kitamura H."/>
            <person name="Kitano H."/>
            <person name="Kollias G."/>
            <person name="Krishnan S.P."/>
            <person name="Kruger A."/>
            <person name="Kummerfeld S.K."/>
            <person name="Kurochkin I.V."/>
            <person name="Lareau L.F."/>
            <person name="Lazarevic D."/>
            <person name="Lipovich L."/>
            <person name="Liu J."/>
            <person name="Liuni S."/>
            <person name="McWilliam S."/>
            <person name="Madan Babu M."/>
            <person name="Madera M."/>
            <person name="Marchionni L."/>
            <person name="Matsuda H."/>
            <person name="Matsuzawa S."/>
            <person name="Miki H."/>
            <person name="Mignone F."/>
            <person name="Miyake S."/>
            <person name="Morris K."/>
            <person name="Mottagui-Tabar S."/>
            <person name="Mulder N."/>
            <person name="Nakano N."/>
            <person name="Nakauchi H."/>
            <person name="Ng P."/>
            <person name="Nilsson R."/>
            <person name="Nishiguchi S."/>
            <person name="Nishikawa S."/>
            <person name="Nori F."/>
            <person name="Ohara O."/>
            <person name="Okazaki Y."/>
            <person name="Orlando V."/>
            <person name="Pang K.C."/>
            <person name="Pavan W.J."/>
            <person name="Pavesi G."/>
            <person name="Pesole G."/>
            <person name="Petrovsky N."/>
            <person name="Piazza S."/>
            <person name="Reed J."/>
            <person name="Reid J.F."/>
            <person name="Ring B.Z."/>
            <person name="Ringwald M."/>
            <person name="Rost B."/>
            <person name="Ruan Y."/>
            <person name="Salzberg S.L."/>
            <person name="Sandelin A."/>
            <person name="Schneider C."/>
            <person name="Schoenbach C."/>
            <person name="Sekiguchi K."/>
            <person name="Semple C.A."/>
            <person name="Seno S."/>
            <person name="Sessa L."/>
            <person name="Sheng Y."/>
            <person name="Shibata Y."/>
            <person name="Shimada H."/>
            <person name="Shimada K."/>
            <person name="Silva D."/>
            <person name="Sinclair B."/>
            <person name="Sperling S."/>
            <person name="Stupka E."/>
            <person name="Sugiura K."/>
            <person name="Sultana R."/>
            <person name="Takenaka Y."/>
            <person name="Taki K."/>
            <person name="Tammoja K."/>
            <person name="Tan S.L."/>
            <person name="Tang S."/>
            <person name="Taylor M.S."/>
            <person name="Tegner J."/>
            <person name="Teichmann S.A."/>
            <person name="Ueda H.R."/>
            <person name="van Nimwegen E."/>
            <person name="Verardo R."/>
            <person name="Wei C.L."/>
            <person name="Yagi K."/>
            <person name="Yamanishi H."/>
            <person name="Zabarovsky E."/>
            <person name="Zhu S."/>
            <person name="Zimmer A."/>
            <person name="Hide W."/>
            <person name="Bult C."/>
            <person name="Grimmond S.M."/>
            <person name="Teasdale R.D."/>
            <person name="Liu E.T."/>
            <person name="Brusic V."/>
            <person name="Quackenbush J."/>
            <person name="Wahlestedt C."/>
            <person name="Mattick J.S."/>
            <person name="Hume D.A."/>
            <person name="Kai C."/>
            <person name="Sasaki D."/>
            <person name="Tomaru Y."/>
            <person name="Fukuda S."/>
            <person name="Kanamori-Katayama M."/>
            <person name="Suzuki M."/>
            <person name="Aoki J."/>
            <person name="Arakawa T."/>
            <person name="Iida J."/>
            <person name="Imamura K."/>
            <person name="Itoh M."/>
            <person name="Kato T."/>
            <person name="Kawaji H."/>
            <person name="Kawagashira N."/>
            <person name="Kawashima T."/>
            <person name="Kojima M."/>
            <person name="Kondo S."/>
            <person name="Konno H."/>
            <person name="Nakano K."/>
            <person name="Ninomiya N."/>
            <person name="Nishio T."/>
            <person name="Okada M."/>
            <person name="Plessy C."/>
            <person name="Shibata K."/>
            <person name="Shiraki T."/>
            <person name="Suzuki S."/>
            <person name="Tagami M."/>
            <person name="Waki K."/>
            <person name="Watahiki A."/>
            <person name="Okamura-Oho Y."/>
            <person name="Suzuki H."/>
            <person name="Kawai J."/>
            <person name="Hayashizaki Y."/>
        </authorList>
    </citation>
    <scope>NUCLEOTIDE SEQUENCE [LARGE SCALE MRNA] (ISOFORM 2)</scope>
    <source>
        <strain>C57BL/6J</strain>
        <tissue>Thymus</tissue>
    </source>
</reference>
<reference key="2">
    <citation type="journal article" date="2009" name="PLoS Biol.">
        <title>Lineage-specific biology revealed by a finished genome assembly of the mouse.</title>
        <authorList>
            <person name="Church D.M."/>
            <person name="Goodstadt L."/>
            <person name="Hillier L.W."/>
            <person name="Zody M.C."/>
            <person name="Goldstein S."/>
            <person name="She X."/>
            <person name="Bult C.J."/>
            <person name="Agarwala R."/>
            <person name="Cherry J.L."/>
            <person name="DiCuccio M."/>
            <person name="Hlavina W."/>
            <person name="Kapustin Y."/>
            <person name="Meric P."/>
            <person name="Maglott D."/>
            <person name="Birtle Z."/>
            <person name="Marques A.C."/>
            <person name="Graves T."/>
            <person name="Zhou S."/>
            <person name="Teague B."/>
            <person name="Potamousis K."/>
            <person name="Churas C."/>
            <person name="Place M."/>
            <person name="Herschleb J."/>
            <person name="Runnheim R."/>
            <person name="Forrest D."/>
            <person name="Amos-Landgraf J."/>
            <person name="Schwartz D.C."/>
            <person name="Cheng Z."/>
            <person name="Lindblad-Toh K."/>
            <person name="Eichler E.E."/>
            <person name="Ponting C.P."/>
        </authorList>
    </citation>
    <scope>NUCLEOTIDE SEQUENCE [LARGE SCALE GENOMIC DNA]</scope>
    <source>
        <strain>C57BL/6J</strain>
    </source>
</reference>
<reference key="3">
    <citation type="journal article" date="2004" name="Genome Res.">
        <title>The status, quality, and expansion of the NIH full-length cDNA project: the Mammalian Gene Collection (MGC).</title>
        <authorList>
            <consortium name="The MGC Project Team"/>
        </authorList>
    </citation>
    <scope>NUCLEOTIDE SEQUENCE [LARGE SCALE MRNA] (ISOFORM 1)</scope>
    <source>
        <tissue>Embryonic stem cell</tissue>
    </source>
</reference>
<reference key="4">
    <citation type="journal article" date="2009" name="Int. J. Mol. Med.">
        <title>Role of Kenae/CCDC125 in cell motility through the deregulation of RhoGTPase.</title>
        <authorList>
            <person name="Araya N."/>
            <person name="Arimura H."/>
            <person name="Kawahara K."/>
            <person name="Yagishita N."/>
            <person name="Ishida J."/>
            <person name="Fujii R."/>
            <person name="Aratani S."/>
            <person name="Fujita H."/>
            <person name="Sato T."/>
            <person name="Yamano Y."/>
            <person name="Higuchi I."/>
            <person name="Osame M."/>
            <person name="Nishioka K."/>
            <person name="Fukamizu A."/>
            <person name="Arimura K."/>
            <person name="Maruyama I."/>
            <person name="Nakajima T."/>
        </authorList>
    </citation>
    <scope>TISSUE SPECIFICITY</scope>
</reference>
<dbReference type="EMBL" id="AK017973">
    <property type="protein sequence ID" value="BAC25536.1"/>
    <property type="molecule type" value="mRNA"/>
</dbReference>
<dbReference type="EMBL" id="AC165159">
    <property type="status" value="NOT_ANNOTATED_CDS"/>
    <property type="molecule type" value="Genomic_DNA"/>
</dbReference>
<dbReference type="EMBL" id="BC085249">
    <property type="protein sequence ID" value="AAH85249.1"/>
    <property type="molecule type" value="mRNA"/>
</dbReference>
<dbReference type="CCDS" id="CCDS26736.1">
    <molecule id="Q5U465-1"/>
</dbReference>
<dbReference type="RefSeq" id="NP_001161858.1">
    <property type="nucleotide sequence ID" value="NM_001168386.2"/>
</dbReference>
<dbReference type="RefSeq" id="NP_898938.4">
    <molecule id="Q5U465-1"/>
    <property type="nucleotide sequence ID" value="NM_183115.5"/>
</dbReference>
<dbReference type="RefSeq" id="XP_011243005.1">
    <molecule id="Q5U465-1"/>
    <property type="nucleotide sequence ID" value="XM_011244703.3"/>
</dbReference>
<dbReference type="RefSeq" id="XP_011243006.1">
    <molecule id="Q5U465-1"/>
    <property type="nucleotide sequence ID" value="XM_011244704.1"/>
</dbReference>
<dbReference type="RefSeq" id="XP_011243007.1">
    <molecule id="Q5U465-1"/>
    <property type="nucleotide sequence ID" value="XM_011244705.1"/>
</dbReference>
<dbReference type="RefSeq" id="XP_017171119.1">
    <property type="nucleotide sequence ID" value="XM_017315630.1"/>
</dbReference>
<dbReference type="SMR" id="Q5U465"/>
<dbReference type="FunCoup" id="Q5U465">
    <property type="interactions" value="547"/>
</dbReference>
<dbReference type="STRING" id="10090.ENSMUSP00000058484"/>
<dbReference type="iPTMnet" id="Q5U465"/>
<dbReference type="PhosphoSitePlus" id="Q5U465"/>
<dbReference type="jPOST" id="Q5U465"/>
<dbReference type="PaxDb" id="10090-ENSMUSP00000058484"/>
<dbReference type="ProteomicsDB" id="281485">
    <molecule id="Q5U465-1"/>
</dbReference>
<dbReference type="ProteomicsDB" id="281486">
    <molecule id="Q5U465-2"/>
</dbReference>
<dbReference type="Antibodypedia" id="50133">
    <property type="antibodies" value="38 antibodies from 7 providers"/>
</dbReference>
<dbReference type="DNASU" id="76041"/>
<dbReference type="Ensembl" id="ENSMUST00000057325.15">
    <molecule id="Q5U465-1"/>
    <property type="protein sequence ID" value="ENSMUSP00000058484.8"/>
    <property type="gene ID" value="ENSMUSG00000048924.15"/>
</dbReference>
<dbReference type="GeneID" id="76041"/>
<dbReference type="KEGG" id="mmu:76041"/>
<dbReference type="UCSC" id="uc007rrj.2">
    <molecule id="Q5U465-1"/>
    <property type="organism name" value="mouse"/>
</dbReference>
<dbReference type="AGR" id="MGI:1923291"/>
<dbReference type="CTD" id="202243"/>
<dbReference type="MGI" id="MGI:1923291">
    <property type="gene designation" value="Ccdc125"/>
</dbReference>
<dbReference type="VEuPathDB" id="HostDB:ENSMUSG00000048924"/>
<dbReference type="eggNOG" id="ENOG502QUQZ">
    <property type="taxonomic scope" value="Eukaryota"/>
</dbReference>
<dbReference type="GeneTree" id="ENSGT00440000039958"/>
<dbReference type="HOGENOM" id="CLU_035720_1_0_1"/>
<dbReference type="InParanoid" id="Q5U465"/>
<dbReference type="OMA" id="MLQKTME"/>
<dbReference type="OrthoDB" id="9939852at2759"/>
<dbReference type="PhylomeDB" id="Q5U465"/>
<dbReference type="TreeFam" id="TF332719"/>
<dbReference type="BioGRID-ORCS" id="76041">
    <property type="hits" value="1 hit in 76 CRISPR screens"/>
</dbReference>
<dbReference type="ChiTaRS" id="Ccdc125">
    <property type="organism name" value="mouse"/>
</dbReference>
<dbReference type="PRO" id="PR:Q5U465"/>
<dbReference type="Proteomes" id="UP000000589">
    <property type="component" value="Chromosome 13"/>
</dbReference>
<dbReference type="RNAct" id="Q5U465">
    <property type="molecule type" value="protein"/>
</dbReference>
<dbReference type="Bgee" id="ENSMUSG00000048924">
    <property type="expression patterns" value="Expressed in granulocyte and 83 other cell types or tissues"/>
</dbReference>
<dbReference type="ExpressionAtlas" id="Q5U465">
    <property type="expression patterns" value="baseline and differential"/>
</dbReference>
<dbReference type="GO" id="GO:0005737">
    <property type="term" value="C:cytoplasm"/>
    <property type="evidence" value="ECO:0007669"/>
    <property type="project" value="UniProtKB-SubCell"/>
</dbReference>
<dbReference type="GO" id="GO:0042802">
    <property type="term" value="F:identical protein binding"/>
    <property type="evidence" value="ECO:0007669"/>
    <property type="project" value="Ensembl"/>
</dbReference>
<dbReference type="GO" id="GO:2000146">
    <property type="term" value="P:negative regulation of cell motility"/>
    <property type="evidence" value="ECO:0007669"/>
    <property type="project" value="Ensembl"/>
</dbReference>
<dbReference type="GO" id="GO:0035024">
    <property type="term" value="P:negative regulation of Rho protein signal transduction"/>
    <property type="evidence" value="ECO:0007669"/>
    <property type="project" value="Ensembl"/>
</dbReference>
<dbReference type="InterPro" id="IPR034608">
    <property type="entry name" value="CCDC125"/>
</dbReference>
<dbReference type="PANTHER" id="PTHR28616">
    <property type="entry name" value="COILED-COIL DOMAIN-CONTAINING PROTEIN 125"/>
    <property type="match status" value="1"/>
</dbReference>
<dbReference type="PANTHER" id="PTHR28616:SF1">
    <property type="entry name" value="COILED-COIL DOMAIN-CONTAINING PROTEIN 125"/>
    <property type="match status" value="1"/>
</dbReference>
<protein>
    <recommendedName>
        <fullName>Coiled-coil domain-containing protein 125</fullName>
    </recommendedName>
</protein>